<name>GASAC_ARATH</name>
<comment type="function">
    <text evidence="1">Gibberellin-regulated protein that may function in hormonal controlled steps of development such as seed germination, flowering and seed maturation.</text>
</comment>
<comment type="subcellular location">
    <subcellularLocation>
        <location evidence="1">Secreted</location>
    </subcellularLocation>
</comment>
<comment type="PTM">
    <text evidence="1">Six disulfide bonds may be present.</text>
</comment>
<comment type="similarity">
    <text evidence="3">Belongs to the GASA family.</text>
</comment>
<comment type="sequence caution" evidence="3">
    <conflict type="erroneous gene model prediction">
        <sequence resource="EMBL-CDS" id="AAC20716"/>
    </conflict>
</comment>
<proteinExistence type="inferred from homology"/>
<accession>Q6GKX7</accession>
<accession>O80848</accession>
<keyword id="KW-1015">Disulfide bond</keyword>
<keyword id="KW-0939">Gibberellin signaling pathway</keyword>
<keyword id="KW-1185">Reference proteome</keyword>
<keyword id="KW-0964">Secreted</keyword>
<keyword id="KW-0732">Signal</keyword>
<dbReference type="EMBL" id="AC004669">
    <property type="protein sequence ID" value="AAC20716.1"/>
    <property type="status" value="ALT_SEQ"/>
    <property type="molecule type" value="Genomic_DNA"/>
</dbReference>
<dbReference type="EMBL" id="CP002685">
    <property type="protein sequence ID" value="AEC08443.1"/>
    <property type="molecule type" value="Genomic_DNA"/>
</dbReference>
<dbReference type="EMBL" id="BT014937">
    <property type="protein sequence ID" value="AAT47788.1"/>
    <property type="molecule type" value="mRNA"/>
</dbReference>
<dbReference type="EMBL" id="BT015386">
    <property type="protein sequence ID" value="AAU05509.1"/>
    <property type="molecule type" value="mRNA"/>
</dbReference>
<dbReference type="PIR" id="A84713">
    <property type="entry name" value="A84713"/>
</dbReference>
<dbReference type="RefSeq" id="NP_180639.2">
    <property type="nucleotide sequence ID" value="NM_128634.3"/>
</dbReference>
<dbReference type="SMR" id="Q6GKX7"/>
<dbReference type="STRING" id="3702.Q6GKX7"/>
<dbReference type="PaxDb" id="3702-AT2G30810.1"/>
<dbReference type="ProteomicsDB" id="248610"/>
<dbReference type="EnsemblPlants" id="AT2G30810.1">
    <property type="protein sequence ID" value="AT2G30810.1"/>
    <property type="gene ID" value="AT2G30810"/>
</dbReference>
<dbReference type="GeneID" id="817632"/>
<dbReference type="Gramene" id="AT2G30810.1">
    <property type="protein sequence ID" value="AT2G30810.1"/>
    <property type="gene ID" value="AT2G30810"/>
</dbReference>
<dbReference type="KEGG" id="ath:AT2G30810"/>
<dbReference type="Araport" id="AT2G30810"/>
<dbReference type="TAIR" id="AT2G30810"/>
<dbReference type="eggNOG" id="ENOG502S6GT">
    <property type="taxonomic scope" value="Eukaryota"/>
</dbReference>
<dbReference type="HOGENOM" id="CLU_142643_1_0_1"/>
<dbReference type="InParanoid" id="Q6GKX7"/>
<dbReference type="OMA" id="QYQCKPA"/>
<dbReference type="PhylomeDB" id="Q6GKX7"/>
<dbReference type="PRO" id="PR:Q6GKX7"/>
<dbReference type="Proteomes" id="UP000006548">
    <property type="component" value="Chromosome 2"/>
</dbReference>
<dbReference type="ExpressionAtlas" id="Q6GKX7">
    <property type="expression patterns" value="baseline and differential"/>
</dbReference>
<dbReference type="GO" id="GO:0005576">
    <property type="term" value="C:extracellular region"/>
    <property type="evidence" value="ECO:0007669"/>
    <property type="project" value="UniProtKB-SubCell"/>
</dbReference>
<dbReference type="GO" id="GO:0009740">
    <property type="term" value="P:gibberellic acid mediated signaling pathway"/>
    <property type="evidence" value="ECO:0007669"/>
    <property type="project" value="UniProtKB-KW"/>
</dbReference>
<dbReference type="InterPro" id="IPR003854">
    <property type="entry name" value="GASA"/>
</dbReference>
<dbReference type="PANTHER" id="PTHR23201">
    <property type="entry name" value="EXTENSIN, PROLINE-RICH PROTEIN"/>
    <property type="match status" value="1"/>
</dbReference>
<dbReference type="PANTHER" id="PTHR23201:SF92">
    <property type="entry name" value="GIBBERELLIN-REGULATED PROTEIN 12"/>
    <property type="match status" value="1"/>
</dbReference>
<dbReference type="Pfam" id="PF02704">
    <property type="entry name" value="GASA"/>
    <property type="match status" value="1"/>
</dbReference>
<organism>
    <name type="scientific">Arabidopsis thaliana</name>
    <name type="common">Mouse-ear cress</name>
    <dbReference type="NCBI Taxonomy" id="3702"/>
    <lineage>
        <taxon>Eukaryota</taxon>
        <taxon>Viridiplantae</taxon>
        <taxon>Streptophyta</taxon>
        <taxon>Embryophyta</taxon>
        <taxon>Tracheophyta</taxon>
        <taxon>Spermatophyta</taxon>
        <taxon>Magnoliopsida</taxon>
        <taxon>eudicotyledons</taxon>
        <taxon>Gunneridae</taxon>
        <taxon>Pentapetalae</taxon>
        <taxon>rosids</taxon>
        <taxon>malvids</taxon>
        <taxon>Brassicales</taxon>
        <taxon>Brassicaceae</taxon>
        <taxon>Camelineae</taxon>
        <taxon>Arabidopsis</taxon>
    </lineage>
</organism>
<protein>
    <recommendedName>
        <fullName>Gibberellin-regulated protein 12</fullName>
    </recommendedName>
    <alternativeName>
        <fullName>GAST1 protein homolog 12</fullName>
    </alternativeName>
</protein>
<evidence type="ECO:0000250" key="1"/>
<evidence type="ECO:0000255" key="2"/>
<evidence type="ECO:0000305" key="3"/>
<feature type="signal peptide" evidence="2">
    <location>
        <begin position="1"/>
        <end position="22"/>
    </location>
</feature>
<feature type="chain" id="PRO_0000413710" description="Gibberellin-regulated protein 12">
    <location>
        <begin position="23"/>
        <end position="106"/>
    </location>
</feature>
<gene>
    <name type="primary">GASA12</name>
    <name type="ordered locus">At2g30810</name>
    <name type="ORF">F7F1.2</name>
</gene>
<reference key="1">
    <citation type="journal article" date="1999" name="Nature">
        <title>Sequence and analysis of chromosome 2 of the plant Arabidopsis thaliana.</title>
        <authorList>
            <person name="Lin X."/>
            <person name="Kaul S."/>
            <person name="Rounsley S.D."/>
            <person name="Shea T.P."/>
            <person name="Benito M.-I."/>
            <person name="Town C.D."/>
            <person name="Fujii C.Y."/>
            <person name="Mason T.M."/>
            <person name="Bowman C.L."/>
            <person name="Barnstead M.E."/>
            <person name="Feldblyum T.V."/>
            <person name="Buell C.R."/>
            <person name="Ketchum K.A."/>
            <person name="Lee J.J."/>
            <person name="Ronning C.M."/>
            <person name="Koo H.L."/>
            <person name="Moffat K.S."/>
            <person name="Cronin L.A."/>
            <person name="Shen M."/>
            <person name="Pai G."/>
            <person name="Van Aken S."/>
            <person name="Umayam L."/>
            <person name="Tallon L.J."/>
            <person name="Gill J.E."/>
            <person name="Adams M.D."/>
            <person name="Carrera A.J."/>
            <person name="Creasy T.H."/>
            <person name="Goodman H.M."/>
            <person name="Somerville C.R."/>
            <person name="Copenhaver G.P."/>
            <person name="Preuss D."/>
            <person name="Nierman W.C."/>
            <person name="White O."/>
            <person name="Eisen J.A."/>
            <person name="Salzberg S.L."/>
            <person name="Fraser C.M."/>
            <person name="Venter J.C."/>
        </authorList>
    </citation>
    <scope>NUCLEOTIDE SEQUENCE [LARGE SCALE GENOMIC DNA]</scope>
    <source>
        <strain>cv. Columbia</strain>
    </source>
</reference>
<reference key="2">
    <citation type="journal article" date="2017" name="Plant J.">
        <title>Araport11: a complete reannotation of the Arabidopsis thaliana reference genome.</title>
        <authorList>
            <person name="Cheng C.Y."/>
            <person name="Krishnakumar V."/>
            <person name="Chan A.P."/>
            <person name="Thibaud-Nissen F."/>
            <person name="Schobel S."/>
            <person name="Town C.D."/>
        </authorList>
    </citation>
    <scope>GENOME REANNOTATION</scope>
    <source>
        <strain>cv. Columbia</strain>
    </source>
</reference>
<reference key="3">
    <citation type="submission" date="2004-06" db="EMBL/GenBank/DDBJ databases">
        <title>Arabidopsis ORF clones.</title>
        <authorList>
            <person name="Cheuk R.F."/>
            <person name="Chen H."/>
            <person name="Kim C.J."/>
            <person name="Shinn P."/>
            <person name="Ecker J.R."/>
        </authorList>
    </citation>
    <scope>NUCLEOTIDE SEQUENCE [LARGE SCALE MRNA]</scope>
    <source>
        <strain>cv. Columbia</strain>
    </source>
</reference>
<reference key="4">
    <citation type="submission" date="2004-08" db="EMBL/GenBank/DDBJ databases">
        <title>Arabidopsis ORF clones.</title>
        <authorList>
            <person name="Kim C.J."/>
            <person name="Chen H."/>
            <person name="Cheuk R.F."/>
            <person name="Shinn P."/>
            <person name="Ecker J.R."/>
        </authorList>
    </citation>
    <scope>NUCLEOTIDE SEQUENCE [LARGE SCALE MRNA]</scope>
    <source>
        <strain>cv. Columbia</strain>
    </source>
</reference>
<sequence length="106" mass="11671">MMKLIVVFVISSLLFATQFSNGDELESQAQAPAIHKNGGEGSLKPEECPKACEYRCSATSHRKPCLFFCNKCCNKCLCVPSGTYGHKEECPCYNNWTTKEGGPKCP</sequence>